<protein>
    <recommendedName>
        <fullName>Catalase</fullName>
        <ecNumber>1.11.1.6</ecNumber>
    </recommendedName>
</protein>
<accession>Q4L643</accession>
<proteinExistence type="inferred from homology"/>
<sequence>MAKDDKRLTGLFGHPVSDRENSMTAGPRGPLLMQDAYFLEQMSHFDREVIPERRMHAKGSGAFGTFTVTNDITKYTNAKIFSEVGKQTEMFARFSTVAGERGAADLERDIRGFALKFYTEDGNWDLVGNNTPVFFFRDSKLFVSLNRAVKRDPRTNMRSPQNNWDFWTGVPEALHQVTILMSDRGMPKDFRHMHGFGSHTYSMYNDEGERVWVKYHFRTQQGIENYTDDEAAEIVGQDRESSQRDLYDAIENGDYPKWKMYIQVMTEEQAKNHPDNPFDLTKVWYKGDYPLIEVGEFELNRNPENYFMDVEQAAFAPTNIIPGLDFSPDKMLQGRLFSYGDAQRYRLGVNHWQIPVNQPKGVGIENMCPFSRDGQMRFLDGNQGGGPHYYPNNKGVYQSQPEYKKPAFPVDGDGYEYNQRQDDDNYFEQPGKLFRLQSDDAKERIFTNTANAMDGVSEDVKHRHIRHCYKADPEYGKGVAKALEIDINDVDLEGTNDETYENF</sequence>
<reference key="1">
    <citation type="journal article" date="2005" name="J. Bacteriol.">
        <title>Whole-genome sequencing of Staphylococcus haemolyticus uncovers the extreme plasticity of its genome and the evolution of human-colonizing staphylococcal species.</title>
        <authorList>
            <person name="Takeuchi F."/>
            <person name="Watanabe S."/>
            <person name="Baba T."/>
            <person name="Yuzawa H."/>
            <person name="Ito T."/>
            <person name="Morimoto Y."/>
            <person name="Kuroda M."/>
            <person name="Cui L."/>
            <person name="Takahashi M."/>
            <person name="Ankai A."/>
            <person name="Baba S."/>
            <person name="Fukui S."/>
            <person name="Lee J.C."/>
            <person name="Hiramatsu K."/>
        </authorList>
    </citation>
    <scope>NUCLEOTIDE SEQUENCE [LARGE SCALE GENOMIC DNA]</scope>
    <source>
        <strain>JCSC1435</strain>
    </source>
</reference>
<gene>
    <name type="primary">katA</name>
    <name type="ordered locus">SH1573</name>
</gene>
<keyword id="KW-0349">Heme</keyword>
<keyword id="KW-0376">Hydrogen peroxide</keyword>
<keyword id="KW-0408">Iron</keyword>
<keyword id="KW-0479">Metal-binding</keyword>
<keyword id="KW-0560">Oxidoreductase</keyword>
<keyword id="KW-0575">Peroxidase</keyword>
<feature type="chain" id="PRO_0000085006" description="Catalase">
    <location>
        <begin position="1"/>
        <end position="503"/>
    </location>
</feature>
<feature type="region of interest" description="Disordered" evidence="3">
    <location>
        <begin position="1"/>
        <end position="26"/>
    </location>
</feature>
<feature type="active site" evidence="2">
    <location>
        <position position="56"/>
    </location>
</feature>
<feature type="active site" evidence="2">
    <location>
        <position position="129"/>
    </location>
</feature>
<feature type="binding site" description="axial binding residue" evidence="1">
    <location>
        <position position="339"/>
    </location>
    <ligand>
        <name>heme</name>
        <dbReference type="ChEBI" id="CHEBI:30413"/>
    </ligand>
    <ligandPart>
        <name>Fe</name>
        <dbReference type="ChEBI" id="CHEBI:18248"/>
    </ligandPart>
</feature>
<name>CATA_STAHJ</name>
<dbReference type="EC" id="1.11.1.6"/>
<dbReference type="EMBL" id="AP006716">
    <property type="protein sequence ID" value="BAE04882.1"/>
    <property type="molecule type" value="Genomic_DNA"/>
</dbReference>
<dbReference type="RefSeq" id="WP_011275863.1">
    <property type="nucleotide sequence ID" value="NC_007168.1"/>
</dbReference>
<dbReference type="SMR" id="Q4L643"/>
<dbReference type="KEGG" id="sha:SH1573"/>
<dbReference type="eggNOG" id="COG0753">
    <property type="taxonomic scope" value="Bacteria"/>
</dbReference>
<dbReference type="HOGENOM" id="CLU_010645_2_0_9"/>
<dbReference type="OrthoDB" id="9760293at2"/>
<dbReference type="Proteomes" id="UP000000543">
    <property type="component" value="Chromosome"/>
</dbReference>
<dbReference type="GO" id="GO:0005737">
    <property type="term" value="C:cytoplasm"/>
    <property type="evidence" value="ECO:0007669"/>
    <property type="project" value="TreeGrafter"/>
</dbReference>
<dbReference type="GO" id="GO:0004096">
    <property type="term" value="F:catalase activity"/>
    <property type="evidence" value="ECO:0007669"/>
    <property type="project" value="UniProtKB-EC"/>
</dbReference>
<dbReference type="GO" id="GO:0020037">
    <property type="term" value="F:heme binding"/>
    <property type="evidence" value="ECO:0007669"/>
    <property type="project" value="InterPro"/>
</dbReference>
<dbReference type="GO" id="GO:0046872">
    <property type="term" value="F:metal ion binding"/>
    <property type="evidence" value="ECO:0007669"/>
    <property type="project" value="UniProtKB-KW"/>
</dbReference>
<dbReference type="GO" id="GO:0042744">
    <property type="term" value="P:hydrogen peroxide catabolic process"/>
    <property type="evidence" value="ECO:0007669"/>
    <property type="project" value="UniProtKB-KW"/>
</dbReference>
<dbReference type="GO" id="GO:0042542">
    <property type="term" value="P:response to hydrogen peroxide"/>
    <property type="evidence" value="ECO:0007669"/>
    <property type="project" value="TreeGrafter"/>
</dbReference>
<dbReference type="CDD" id="cd08156">
    <property type="entry name" value="catalase_clade_3"/>
    <property type="match status" value="1"/>
</dbReference>
<dbReference type="FunFam" id="2.40.180.10:FF:000001">
    <property type="entry name" value="Catalase"/>
    <property type="match status" value="1"/>
</dbReference>
<dbReference type="Gene3D" id="2.40.180.10">
    <property type="entry name" value="Catalase core domain"/>
    <property type="match status" value="1"/>
</dbReference>
<dbReference type="InterPro" id="IPR018028">
    <property type="entry name" value="Catalase"/>
</dbReference>
<dbReference type="InterPro" id="IPR040333">
    <property type="entry name" value="Catalase_3"/>
</dbReference>
<dbReference type="InterPro" id="IPR024708">
    <property type="entry name" value="Catalase_AS"/>
</dbReference>
<dbReference type="InterPro" id="IPR024711">
    <property type="entry name" value="Catalase_clade1/3"/>
</dbReference>
<dbReference type="InterPro" id="IPR011614">
    <property type="entry name" value="Catalase_core"/>
</dbReference>
<dbReference type="InterPro" id="IPR002226">
    <property type="entry name" value="Catalase_haem_BS"/>
</dbReference>
<dbReference type="InterPro" id="IPR010582">
    <property type="entry name" value="Catalase_immune_responsive"/>
</dbReference>
<dbReference type="InterPro" id="IPR020835">
    <property type="entry name" value="Catalase_sf"/>
</dbReference>
<dbReference type="PANTHER" id="PTHR11465">
    <property type="entry name" value="CATALASE"/>
    <property type="match status" value="1"/>
</dbReference>
<dbReference type="PANTHER" id="PTHR11465:SF61">
    <property type="entry name" value="CATALASE"/>
    <property type="match status" value="1"/>
</dbReference>
<dbReference type="Pfam" id="PF00199">
    <property type="entry name" value="Catalase"/>
    <property type="match status" value="1"/>
</dbReference>
<dbReference type="Pfam" id="PF06628">
    <property type="entry name" value="Catalase-rel"/>
    <property type="match status" value="1"/>
</dbReference>
<dbReference type="PIRSF" id="PIRSF038928">
    <property type="entry name" value="Catalase_clade1-3"/>
    <property type="match status" value="1"/>
</dbReference>
<dbReference type="PRINTS" id="PR00067">
    <property type="entry name" value="CATALASE"/>
</dbReference>
<dbReference type="SMART" id="SM01060">
    <property type="entry name" value="Catalase"/>
    <property type="match status" value="1"/>
</dbReference>
<dbReference type="SUPFAM" id="SSF56634">
    <property type="entry name" value="Heme-dependent catalase-like"/>
    <property type="match status" value="1"/>
</dbReference>
<dbReference type="PROSITE" id="PS00437">
    <property type="entry name" value="CATALASE_1"/>
    <property type="match status" value="1"/>
</dbReference>
<dbReference type="PROSITE" id="PS00438">
    <property type="entry name" value="CATALASE_2"/>
    <property type="match status" value="1"/>
</dbReference>
<dbReference type="PROSITE" id="PS51402">
    <property type="entry name" value="CATALASE_3"/>
    <property type="match status" value="1"/>
</dbReference>
<evidence type="ECO:0000250" key="1"/>
<evidence type="ECO:0000255" key="2">
    <source>
        <dbReference type="PROSITE-ProRule" id="PRU10013"/>
    </source>
</evidence>
<evidence type="ECO:0000256" key="3">
    <source>
        <dbReference type="SAM" id="MobiDB-lite"/>
    </source>
</evidence>
<evidence type="ECO:0000305" key="4"/>
<organism>
    <name type="scientific">Staphylococcus haemolyticus (strain JCSC1435)</name>
    <dbReference type="NCBI Taxonomy" id="279808"/>
    <lineage>
        <taxon>Bacteria</taxon>
        <taxon>Bacillati</taxon>
        <taxon>Bacillota</taxon>
        <taxon>Bacilli</taxon>
        <taxon>Bacillales</taxon>
        <taxon>Staphylococcaceae</taxon>
        <taxon>Staphylococcus</taxon>
    </lineage>
</organism>
<comment type="function">
    <text evidence="1">Decomposes hydrogen peroxide into water and oxygen; serves to protect cells from the toxic effects of hydrogen peroxide.</text>
</comment>
<comment type="catalytic activity">
    <reaction evidence="2">
        <text>2 H2O2 = O2 + 2 H2O</text>
        <dbReference type="Rhea" id="RHEA:20309"/>
        <dbReference type="ChEBI" id="CHEBI:15377"/>
        <dbReference type="ChEBI" id="CHEBI:15379"/>
        <dbReference type="ChEBI" id="CHEBI:16240"/>
        <dbReference type="EC" id="1.11.1.6"/>
    </reaction>
</comment>
<comment type="cofactor">
    <cofactor evidence="1">
        <name>heme</name>
        <dbReference type="ChEBI" id="CHEBI:30413"/>
    </cofactor>
</comment>
<comment type="subunit">
    <text evidence="1">Homodimer.</text>
</comment>
<comment type="similarity">
    <text evidence="4">Belongs to the catalase family.</text>
</comment>